<sequence>MSHQPLSCLTEKGDSPTETTGNGPPTLAHPNLDTFTPHELLQQMRELLIENHQLKEAMKLNNQAMKGRFEELSAWTEKQKEERLFFETQSKEAKERLTALSLENEKLKQELGKLKGKTERSFEDLTGDPRVPKAEAEQEVEQLKTQVARLQAEKADLLGIVSELQLKLNSGGPSEDSFVEIRMAEGEADAAMKEIKTSPGPIRTDSIDTSKSAEGTRNYLEFEELTVSQLLLCLREGNQKVERLEIALKEAKERILDFEKKAKDRSETETQTEEHKEQEKEEEKSPETVGSEVEMLNLQVTTLFKELQEAHTKLSEAELMKKRLQEKCQALERKNSATPSELNEKQELLYNNKKLELQVESMRSEIKMEQAKTEEEKSKLTTLQLTHNRLLQEYNNALKTIEELKRRESEKVDKVVLQELNGKLEMAEKALASKQLQMDEMKQTIAKQEKDLETMAVLRAQMEVYCSDFHAERAAREKIHEEKEQLALQLAVLLKDDNAFEEGASRQSLMEMQSRHGARASDADQQAFLVQRGAEDRNWLQQQQQNIPIHSCPKCGEVLPDIDTLLIHVTDCII</sequence>
<keyword id="KW-0072">Autophagy</keyword>
<keyword id="KW-0175">Coiled coil</keyword>
<keyword id="KW-0963">Cytoplasm</keyword>
<keyword id="KW-0968">Cytoplasmic vesicle</keyword>
<keyword id="KW-0967">Endosome</keyword>
<keyword id="KW-0333">Golgi apparatus</keyword>
<keyword id="KW-0479">Metal-binding</keyword>
<keyword id="KW-0597">Phosphoprotein</keyword>
<keyword id="KW-1185">Reference proteome</keyword>
<keyword id="KW-0862">Zinc</keyword>
<keyword id="KW-0863">Zinc-finger</keyword>
<protein>
    <recommendedName>
        <fullName>Optineurin</fullName>
    </recommendedName>
</protein>
<evidence type="ECO:0000250" key="1"/>
<evidence type="ECO:0000250" key="2">
    <source>
        <dbReference type="UniProtKB" id="Q96CV9"/>
    </source>
</evidence>
<evidence type="ECO:0000255" key="3"/>
<evidence type="ECO:0000255" key="4">
    <source>
        <dbReference type="PROSITE-ProRule" id="PRU01142"/>
    </source>
</evidence>
<evidence type="ECO:0000256" key="5">
    <source>
        <dbReference type="SAM" id="MobiDB-lite"/>
    </source>
</evidence>
<evidence type="ECO:0000269" key="6">
    <source>
    </source>
</evidence>
<evidence type="ECO:0000269" key="7">
    <source>
    </source>
</evidence>
<reference key="1">
    <citation type="journal article" date="2004" name="Invest. Ophthalmol. Vis. Sci.">
        <title>Analysis of porcine optineurin and myocilin expression in trabecular meshwork cells and astrocytes from optic nerve head.</title>
        <authorList>
            <person name="Obazawa M."/>
            <person name="Mashima Y."/>
            <person name="Sanuki N."/>
            <person name="Noda S."/>
            <person name="Kudoh J."/>
            <person name="Shimizu N."/>
            <person name="Oguchi Y."/>
            <person name="Tanaka Y."/>
            <person name="Iwata T."/>
        </authorList>
    </citation>
    <scope>NUCLEOTIDE SEQUENCE [MRNA]</scope>
    <scope>TISSUE SPECIFICITY</scope>
    <scope>INDUCTION</scope>
</reference>
<reference key="2">
    <citation type="journal article" date="2002" name="Science">
        <title>Adult-onset primary open-angle glaucoma caused by mutations in optineurin.</title>
        <authorList>
            <person name="Rezaie T."/>
            <person name="Child A."/>
            <person name="Hitchings R."/>
            <person name="Brice G."/>
            <person name="Miller L."/>
            <person name="Coca-Prados M."/>
            <person name="Heon E."/>
            <person name="Krupin T."/>
            <person name="Ritch R."/>
            <person name="Kreutzer D."/>
            <person name="Crick R.P."/>
            <person name="Sarfarazi M."/>
        </authorList>
    </citation>
    <scope>TISSUE SPECIFICITY</scope>
</reference>
<gene>
    <name type="primary">OPTN</name>
</gene>
<dbReference type="EMBL" id="AF513722">
    <property type="protein sequence ID" value="AAP47176.1"/>
    <property type="molecule type" value="mRNA"/>
</dbReference>
<dbReference type="RefSeq" id="NP_999126.1">
    <property type="nucleotide sequence ID" value="NM_213961.1"/>
</dbReference>
<dbReference type="RefSeq" id="XP_005656884.1">
    <property type="nucleotide sequence ID" value="XM_005656827.3"/>
</dbReference>
<dbReference type="RefSeq" id="XP_013845202.1">
    <property type="nucleotide sequence ID" value="XM_013989748.1"/>
</dbReference>
<dbReference type="SMR" id="Q7YS99"/>
<dbReference type="FunCoup" id="Q7YS99">
    <property type="interactions" value="221"/>
</dbReference>
<dbReference type="STRING" id="9823.ENSSSCP00000025164"/>
<dbReference type="GlyGen" id="Q7YS99">
    <property type="glycosylation" value="1 site"/>
</dbReference>
<dbReference type="PaxDb" id="9823-ENSSSCP00000025164"/>
<dbReference type="PeptideAtlas" id="Q7YS99"/>
<dbReference type="Ensembl" id="ENSSSCT00000046449.3">
    <property type="protein sequence ID" value="ENSSSCP00000037462.3"/>
    <property type="gene ID" value="ENSSSCG00000023247.4"/>
</dbReference>
<dbReference type="Ensembl" id="ENSSSCT00035059158.1">
    <property type="protein sequence ID" value="ENSSSCP00035023772.1"/>
    <property type="gene ID" value="ENSSSCG00035044520.1"/>
</dbReference>
<dbReference type="Ensembl" id="ENSSSCT00045056961.1">
    <property type="protein sequence ID" value="ENSSSCP00045039796.1"/>
    <property type="gene ID" value="ENSSSCG00045033326.1"/>
</dbReference>
<dbReference type="Ensembl" id="ENSSSCT00060016250.1">
    <property type="protein sequence ID" value="ENSSSCP00060006396.1"/>
    <property type="gene ID" value="ENSSSCG00060012397.1"/>
</dbReference>
<dbReference type="Ensembl" id="ENSSSCT00065069382.1">
    <property type="protein sequence ID" value="ENSSSCP00065030224.1"/>
    <property type="gene ID" value="ENSSSCG00065050651.1"/>
</dbReference>
<dbReference type="Ensembl" id="ENSSSCT00070054817.1">
    <property type="protein sequence ID" value="ENSSSCP00070046496.1"/>
    <property type="gene ID" value="ENSSSCG00070027328.1"/>
</dbReference>
<dbReference type="GeneID" id="397011"/>
<dbReference type="KEGG" id="ssc:397011"/>
<dbReference type="CTD" id="10133"/>
<dbReference type="VGNC" id="VGNC:95832">
    <property type="gene designation" value="OPTN"/>
</dbReference>
<dbReference type="eggNOG" id="ENOG502QTG2">
    <property type="taxonomic scope" value="Eukaryota"/>
</dbReference>
<dbReference type="GeneTree" id="ENSGT00530000063808"/>
<dbReference type="HOGENOM" id="CLU_034097_1_0_1"/>
<dbReference type="InParanoid" id="Q7YS99"/>
<dbReference type="OMA" id="DMKQEMF"/>
<dbReference type="OrthoDB" id="6343844at2759"/>
<dbReference type="TreeFam" id="TF326608"/>
<dbReference type="Reactome" id="R-SSC-2565942">
    <property type="pathway name" value="Regulation of PLK1 Activity at G2/M Transition"/>
</dbReference>
<dbReference type="Reactome" id="R-SSC-5205685">
    <property type="pathway name" value="PINK1-PRKN Mediated Mitophagy"/>
</dbReference>
<dbReference type="Reactome" id="R-SSC-5357905">
    <property type="pathway name" value="Regulation of TNFR1 signaling"/>
</dbReference>
<dbReference type="Reactome" id="R-SSC-5357956">
    <property type="pathway name" value="TNFR1-induced NF-kappa-B signaling pathway"/>
</dbReference>
<dbReference type="Reactome" id="R-SSC-8854214">
    <property type="pathway name" value="TBC/RABGAPs"/>
</dbReference>
<dbReference type="Reactome" id="R-SSC-936964">
    <property type="pathway name" value="Activation of IRF3, IRF7 mediated by TBK1, IKKEpsilon (IKBKE)"/>
</dbReference>
<dbReference type="Reactome" id="R-SSC-9824878">
    <property type="pathway name" value="Regulation of TBK1, IKKEpsilon (IKBKE)-mediated activation of IRF3, IRF7"/>
</dbReference>
<dbReference type="Proteomes" id="UP000008227">
    <property type="component" value="Chromosome 10"/>
</dbReference>
<dbReference type="Proteomes" id="UP000314985">
    <property type="component" value="Chromosome 15"/>
</dbReference>
<dbReference type="Proteomes" id="UP000694570">
    <property type="component" value="Unplaced"/>
</dbReference>
<dbReference type="Proteomes" id="UP000694571">
    <property type="component" value="Unplaced"/>
</dbReference>
<dbReference type="Proteomes" id="UP000694720">
    <property type="component" value="Unplaced"/>
</dbReference>
<dbReference type="Proteomes" id="UP000694722">
    <property type="component" value="Unplaced"/>
</dbReference>
<dbReference type="Proteomes" id="UP000694723">
    <property type="component" value="Unplaced"/>
</dbReference>
<dbReference type="Proteomes" id="UP000694724">
    <property type="component" value="Unplaced"/>
</dbReference>
<dbReference type="Proteomes" id="UP000694725">
    <property type="component" value="Unplaced"/>
</dbReference>
<dbReference type="Proteomes" id="UP000694726">
    <property type="component" value="Unplaced"/>
</dbReference>
<dbReference type="Proteomes" id="UP000694727">
    <property type="component" value="Unplaced"/>
</dbReference>
<dbReference type="Proteomes" id="UP000694728">
    <property type="component" value="Unplaced"/>
</dbReference>
<dbReference type="GO" id="GO:0005776">
    <property type="term" value="C:autophagosome"/>
    <property type="evidence" value="ECO:0007669"/>
    <property type="project" value="UniProtKB-SubCell"/>
</dbReference>
<dbReference type="GO" id="GO:0005737">
    <property type="term" value="C:cytoplasm"/>
    <property type="evidence" value="ECO:0000318"/>
    <property type="project" value="GO_Central"/>
</dbReference>
<dbReference type="GO" id="GO:0005829">
    <property type="term" value="C:cytosol"/>
    <property type="evidence" value="ECO:0007669"/>
    <property type="project" value="Ensembl"/>
</dbReference>
<dbReference type="GO" id="GO:0005794">
    <property type="term" value="C:Golgi apparatus"/>
    <property type="evidence" value="ECO:0000250"/>
    <property type="project" value="UniProtKB"/>
</dbReference>
<dbReference type="GO" id="GO:0005634">
    <property type="term" value="C:nucleus"/>
    <property type="evidence" value="ECO:0000318"/>
    <property type="project" value="GO_Central"/>
</dbReference>
<dbReference type="GO" id="GO:0048471">
    <property type="term" value="C:perinuclear region of cytoplasm"/>
    <property type="evidence" value="ECO:0007669"/>
    <property type="project" value="UniProtKB-SubCell"/>
</dbReference>
<dbReference type="GO" id="GO:0055037">
    <property type="term" value="C:recycling endosome"/>
    <property type="evidence" value="ECO:0007669"/>
    <property type="project" value="UniProtKB-SubCell"/>
</dbReference>
<dbReference type="GO" id="GO:0005802">
    <property type="term" value="C:trans-Golgi network"/>
    <property type="evidence" value="ECO:0000250"/>
    <property type="project" value="UniProtKB"/>
</dbReference>
<dbReference type="GO" id="GO:0042802">
    <property type="term" value="F:identical protein binding"/>
    <property type="evidence" value="ECO:0007669"/>
    <property type="project" value="Ensembl"/>
</dbReference>
<dbReference type="GO" id="GO:0070530">
    <property type="term" value="F:K63-linked polyubiquitin modification-dependent protein binding"/>
    <property type="evidence" value="ECO:0000318"/>
    <property type="project" value="GO_Central"/>
</dbReference>
<dbReference type="GO" id="GO:0030674">
    <property type="term" value="F:protein-macromolecule adaptor activity"/>
    <property type="evidence" value="ECO:0007669"/>
    <property type="project" value="Ensembl"/>
</dbReference>
<dbReference type="GO" id="GO:0008270">
    <property type="term" value="F:zinc ion binding"/>
    <property type="evidence" value="ECO:0007669"/>
    <property type="project" value="UniProtKB-KW"/>
</dbReference>
<dbReference type="GO" id="GO:0034620">
    <property type="term" value="P:cellular response to unfolded protein"/>
    <property type="evidence" value="ECO:0000250"/>
    <property type="project" value="UniProtKB"/>
</dbReference>
<dbReference type="GO" id="GO:0050829">
    <property type="term" value="P:defense response to Gram-negative bacterium"/>
    <property type="evidence" value="ECO:0007669"/>
    <property type="project" value="Ensembl"/>
</dbReference>
<dbReference type="GO" id="GO:0090161">
    <property type="term" value="P:Golgi ribbon formation"/>
    <property type="evidence" value="ECO:0000250"/>
    <property type="project" value="UniProtKB"/>
</dbReference>
<dbReference type="GO" id="GO:0043001">
    <property type="term" value="P:Golgi to plasma membrane protein transport"/>
    <property type="evidence" value="ECO:0007669"/>
    <property type="project" value="Ensembl"/>
</dbReference>
<dbReference type="GO" id="GO:0043124">
    <property type="term" value="P:negative regulation of canonical NF-kappaB signal transduction"/>
    <property type="evidence" value="ECO:0007669"/>
    <property type="project" value="Ensembl"/>
</dbReference>
<dbReference type="GO" id="GO:0001920">
    <property type="term" value="P:negative regulation of receptor recycling"/>
    <property type="evidence" value="ECO:0007669"/>
    <property type="project" value="Ensembl"/>
</dbReference>
<dbReference type="GO" id="GO:1904417">
    <property type="term" value="P:positive regulation of xenophagy"/>
    <property type="evidence" value="ECO:0007669"/>
    <property type="project" value="Ensembl"/>
</dbReference>
<dbReference type="GO" id="GO:0034067">
    <property type="term" value="P:protein localization to Golgi apparatus"/>
    <property type="evidence" value="ECO:0000318"/>
    <property type="project" value="GO_Central"/>
</dbReference>
<dbReference type="GO" id="GO:0043122">
    <property type="term" value="P:regulation of canonical NF-kappaB signal transduction"/>
    <property type="evidence" value="ECO:0000318"/>
    <property type="project" value="GO_Central"/>
</dbReference>
<dbReference type="GO" id="GO:0061734">
    <property type="term" value="P:type 2 mitophagy"/>
    <property type="evidence" value="ECO:0007669"/>
    <property type="project" value="Ensembl"/>
</dbReference>
<dbReference type="CDD" id="cd09803">
    <property type="entry name" value="UBAN"/>
    <property type="match status" value="1"/>
</dbReference>
<dbReference type="FunFam" id="1.20.5.390:FF:000004">
    <property type="entry name" value="Optineurin"/>
    <property type="match status" value="1"/>
</dbReference>
<dbReference type="FunFam" id="1.20.5.390:FF:000007">
    <property type="entry name" value="Optineurin"/>
    <property type="match status" value="1"/>
</dbReference>
<dbReference type="FunFam" id="1.20.5.990:FF:000002">
    <property type="entry name" value="Optineurin"/>
    <property type="match status" value="1"/>
</dbReference>
<dbReference type="Gene3D" id="1.20.5.390">
    <property type="entry name" value="L1 transposable element, trimerization domain"/>
    <property type="match status" value="2"/>
</dbReference>
<dbReference type="Gene3D" id="1.20.5.990">
    <property type="entry name" value="Nemo cc2-lz domain - 1d5 darpin complex"/>
    <property type="match status" value="1"/>
</dbReference>
<dbReference type="InterPro" id="IPR032419">
    <property type="entry name" value="CC2-LZ_dom"/>
</dbReference>
<dbReference type="InterPro" id="IPR021063">
    <property type="entry name" value="NEMO_N"/>
</dbReference>
<dbReference type="InterPro" id="IPR034735">
    <property type="entry name" value="NEMO_ZF"/>
</dbReference>
<dbReference type="InterPro" id="IPR051301">
    <property type="entry name" value="Optineurin/NFkB_EssMod"/>
</dbReference>
<dbReference type="PANTHER" id="PTHR31553">
    <property type="entry name" value="NF-KAPPA-B ESSENTIAL MODULATOR"/>
    <property type="match status" value="1"/>
</dbReference>
<dbReference type="PANTHER" id="PTHR31553:SF2">
    <property type="entry name" value="OPTINEURIN"/>
    <property type="match status" value="1"/>
</dbReference>
<dbReference type="Pfam" id="PF16516">
    <property type="entry name" value="CC2-LZ"/>
    <property type="match status" value="1"/>
</dbReference>
<dbReference type="Pfam" id="PF11577">
    <property type="entry name" value="NEMO"/>
    <property type="match status" value="1"/>
</dbReference>
<dbReference type="Pfam" id="PF18414">
    <property type="entry name" value="zf_C2H2_10"/>
    <property type="match status" value="1"/>
</dbReference>
<dbReference type="PROSITE" id="PS51801">
    <property type="entry name" value="ZF_CCHC_NOA"/>
    <property type="match status" value="1"/>
</dbReference>
<accession>Q7YS99</accession>
<comment type="function">
    <text evidence="1 2">Plays an important role in the maintenance of the Golgi complex, in membrane trafficking, in exocytosis, through its interaction with myosin VI and Rab8. Links myosin VI to the Golgi complex and plays an important role in Golgi ribbon formation. Negatively regulates the induction of IFNB in response to RNA virus infection. Plays a neuroprotective role in the eye and optic nerve. Probably part of the TNF-alpha signaling pathway that can shift the equilibrium toward induction of cell death. May act by regulating membrane trafficking and cellular morphogenesis via a complex that contains Rab8 and huntingtin (HD). Mediates the interaction of Rab8 with the probable GTPase-activating protein TBC1D17 during Rab8-mediated endocytic trafficking, such as that of transferrin receptor (TFRC/TfR); regulates Rab8 recruitment to tubules emanating from the endocytic recycling compartment. Autophagy receptor that interacts directly with both the cargo to become degraded and an autophagy modifier of the MAP1 LC3 family; targets ubiquitin-coated bacteria (xenophagy) and appears to function in the same pathway as SQSTM1 and CALCOCO2/NDP52.</text>
</comment>
<comment type="subunit">
    <text evidence="2">Self-associates. Interacts with HD. Interacts with GTF3A. Interacts with MYO6. Interacts (via UBAN) with ubiquitinated TFRC. Interacts with GTP-bound Rab8 (RAB8A and/or RAB8B). Interacts with TBC1D17. Interacts with TBK1. Interacts with TRAF3. Binds to linear ubiquitin chains. Interacts with LC3 family members MAP1LC3A, MAP1LC3B, GABARAP, GABARAPL1 and GABARAPL2; OPTN phosphorylation increases the association (at least with MAP1LC3B). Interacts with RAB12; the interaction may be indirect. Interacts with TBK1; this interaction leads to the Golgi localization of TBK1 and its subsequent activation. Interacts with palmitoyltransferase ZDHHC17/HIP14; the interaction does not lead to palmitoylation of OPTN. Interacts with CYLD. Interacts with TOM1; the interaction is indirect and is mediated by MYO6, which acts as a bridge between TOM1 and OPTN. Interacts with USP12; the interaction is independent of USP12 deubiquitinase activity and may be involved in regulation of autophagic flux.</text>
</comment>
<comment type="subcellular location">
    <subcellularLocation>
        <location evidence="1">Cytoplasm</location>
        <location evidence="1">Perinuclear region</location>
    </subcellularLocation>
    <subcellularLocation>
        <location evidence="2">Golgi apparatus</location>
    </subcellularLocation>
    <subcellularLocation>
        <location evidence="1">Golgi apparatus</location>
        <location evidence="1">trans-Golgi network</location>
    </subcellularLocation>
    <subcellularLocation>
        <location evidence="1">Cytoplasmic vesicle</location>
        <location evidence="1">Autophagosome</location>
    </subcellularLocation>
    <subcellularLocation>
        <location evidence="1">Cytoplasmic vesicle</location>
    </subcellularLocation>
    <subcellularLocation>
        <location evidence="1">Recycling endosome</location>
    </subcellularLocation>
    <text evidence="1 2">Found in the perinuclear region and associates with the Golgi apparatus. Colocalizes with MYO6 and RAB8 at the Golgi complex and in vesicular structures close to the plasma membrane. Localizes to LC3-positive cytoplasmic vesicles upon induction of autophagy.</text>
</comment>
<comment type="tissue specificity">
    <text evidence="6 7">Present in aqueous humor of the eye (at protein level). Expressed in trabecular meshwork and astrocytes.</text>
</comment>
<comment type="induction">
    <text evidence="7">Down-regulated upon treatment with dexamethasone. Not regulated by hypoxic conditions.</text>
</comment>
<comment type="domain">
    <text evidence="1">Ubiquitin-binding motif (UBAN) is essential for its inhibitory function, subcellular localization and interaction with TBK1.</text>
</comment>
<comment type="domain">
    <text evidence="1">The LIR (LC3-interacting region) motif mediates the interaction with ATG8 family proteins.</text>
</comment>
<comment type="PTM">
    <text evidence="1">Phosphorylated by TBK1, leading to restrict bacterial proliferation in case of infection.</text>
</comment>
<proteinExistence type="evidence at protein level"/>
<name>OPTN_PIG</name>
<organism>
    <name type="scientific">Sus scrofa</name>
    <name type="common">Pig</name>
    <dbReference type="NCBI Taxonomy" id="9823"/>
    <lineage>
        <taxon>Eukaryota</taxon>
        <taxon>Metazoa</taxon>
        <taxon>Chordata</taxon>
        <taxon>Craniata</taxon>
        <taxon>Vertebrata</taxon>
        <taxon>Euteleostomi</taxon>
        <taxon>Mammalia</taxon>
        <taxon>Eutheria</taxon>
        <taxon>Laurasiatheria</taxon>
        <taxon>Artiodactyla</taxon>
        <taxon>Suina</taxon>
        <taxon>Suidae</taxon>
        <taxon>Sus</taxon>
    </lineage>
</organism>
<feature type="chain" id="PRO_0000058070" description="Optineurin">
    <location>
        <begin position="1"/>
        <end position="574"/>
    </location>
</feature>
<feature type="zinc finger region" description="CCHC NOA-type" evidence="4">
    <location>
        <begin position="544"/>
        <end position="574"/>
    </location>
</feature>
<feature type="region of interest" description="Disordered" evidence="5">
    <location>
        <begin position="1"/>
        <end position="33"/>
    </location>
</feature>
<feature type="region of interest" description="Interaction with Rab8" evidence="1">
    <location>
        <begin position="58"/>
        <end position="209"/>
    </location>
</feature>
<feature type="region of interest" description="Disordered" evidence="5">
    <location>
        <begin position="262"/>
        <end position="292"/>
    </location>
</feature>
<feature type="region of interest" description="Interaction with HD" evidence="1">
    <location>
        <begin position="405"/>
        <end position="574"/>
    </location>
</feature>
<feature type="region of interest" description="Interaction with MYO6" evidence="2">
    <location>
        <begin position="406"/>
        <end position="515"/>
    </location>
</feature>
<feature type="coiled-coil region" evidence="3">
    <location>
        <begin position="38"/>
        <end position="170"/>
    </location>
</feature>
<feature type="coiled-coil region" evidence="3">
    <location>
        <begin position="233"/>
        <end position="496"/>
    </location>
</feature>
<feature type="short sequence motif" description="LIR">
    <location>
        <begin position="176"/>
        <end position="181"/>
    </location>
</feature>
<feature type="short sequence motif" description="UBAN">
    <location>
        <begin position="468"/>
        <end position="473"/>
    </location>
</feature>
<feature type="compositionally biased region" description="Basic and acidic residues" evidence="5">
    <location>
        <begin position="262"/>
        <end position="286"/>
    </location>
</feature>
<feature type="binding site" evidence="4">
    <location>
        <position position="552"/>
    </location>
    <ligand>
        <name>Zn(2+)</name>
        <dbReference type="ChEBI" id="CHEBI:29105"/>
    </ligand>
</feature>
<feature type="binding site" evidence="4">
    <location>
        <position position="555"/>
    </location>
    <ligand>
        <name>Zn(2+)</name>
        <dbReference type="ChEBI" id="CHEBI:29105"/>
    </ligand>
</feature>
<feature type="binding site" evidence="4">
    <location>
        <position position="568"/>
    </location>
    <ligand>
        <name>Zn(2+)</name>
        <dbReference type="ChEBI" id="CHEBI:29105"/>
    </ligand>
</feature>
<feature type="binding site" evidence="4">
    <location>
        <position position="572"/>
    </location>
    <ligand>
        <name>Zn(2+)</name>
        <dbReference type="ChEBI" id="CHEBI:29105"/>
    </ligand>
</feature>
<feature type="modified residue" description="Phosphoserine; by TBK1" evidence="2">
    <location>
        <position position="177"/>
    </location>
</feature>
<feature type="modified residue" description="Phosphoserine" evidence="2">
    <location>
        <position position="198"/>
    </location>
</feature>
<feature type="modified residue" description="Phosphoserine" evidence="2">
    <location>
        <position position="336"/>
    </location>
</feature>
<feature type="modified residue" description="Phosphoserine" evidence="2">
    <location>
        <position position="521"/>
    </location>
</feature>